<name>ECFA2_STRT2</name>
<sequence length="280" mass="30942">MGISLENVSYTYQSGTPFERRALFDMTVTIKDGSYTAFIGHTGSGKSTIMQLLNGLYLPTSGQVKVDDTIINSQSKNKEIKPIRKKVGLVFQFPESQLFAETVLEDIAFGPQNFGVSKEEAEQRALESLRLVGLSDELRDQNPFDLSGGQMRRVAIAGILAMQPDILVLDEPTAGLDPQGRKELMSLFKQLHLSGITIVLVTHLMDDVADYATAVNVMEKGRLVLSGTPKDVFQKVAFLKEKQLGVPKITEFALQLQEKGYSFESLPITIEEFVEVLVHG</sequence>
<proteinExistence type="evidence at protein level"/>
<feature type="chain" id="PRO_0000288009" description="Energy-coupling factor transporter ATP-binding protein EcfA2">
    <location>
        <begin position="1"/>
        <end position="280"/>
    </location>
</feature>
<feature type="domain" description="ABC transporter" evidence="2">
    <location>
        <begin position="3"/>
        <end position="245"/>
    </location>
</feature>
<feature type="active site" description="Proton acceptor" evidence="1">
    <location>
        <position position="171"/>
    </location>
</feature>
<feature type="binding site" evidence="2">
    <location>
        <begin position="40"/>
        <end position="47"/>
    </location>
    <ligand>
        <name>ATP</name>
        <dbReference type="ChEBI" id="CHEBI:30616"/>
    </ligand>
</feature>
<feature type="mutagenesis site" description="No effect on ATPase, 10-fold decrease in riboflavin uptake; when associated with A-90 in EcfA1." evidence="3">
    <original>Q</original>
    <variation>A</variation>
    <location>
        <position position="97"/>
    </location>
</feature>
<feature type="mutagenesis site" description="10-fold decrease in ATPase and riboflavin uptake; when associated with Q-163 in EcfA1." evidence="3">
    <original>E</original>
    <variation>Q</variation>
    <location>
        <position position="171"/>
    </location>
</feature>
<comment type="function">
    <text evidence="2 3">ATP-binding (A) component of a common energy-coupling factor (ECF) ABC-transporter complex. Unlike classic ABC transporters this ECF transporter provides the energy necessary to transport a number of different substrates (By similarity). Expression of the complex plus RibU in de-energized E.coli allows riboflavin uptake.</text>
</comment>
<comment type="subunit">
    <text evidence="2 3">Forms a stable energy-coupling factor (ECF) transporter complex composed of 2 membrane-embedded substrate-binding proteins (S component), 2 ATP-binding proteins (A component) and 2 transmembrane proteins (T component) upon coexpression of the components in E.coli. May be able to interact with more than 1 S component at a time.</text>
</comment>
<comment type="subcellular location">
    <subcellularLocation>
        <location evidence="2 4">Cell membrane</location>
        <topology evidence="2 4">Peripheral membrane protein</topology>
    </subcellularLocation>
</comment>
<comment type="similarity">
    <text evidence="2">Belongs to the ABC transporter superfamily. Energy-coupling factor EcfA family.</text>
</comment>
<protein>
    <recommendedName>
        <fullName evidence="2">Energy-coupling factor transporter ATP-binding protein EcfA2</fullName>
        <shortName evidence="2">ECF transporter A component EcfA2</shortName>
        <ecNumber evidence="2">7.-.-.-</ecNumber>
    </recommendedName>
</protein>
<dbReference type="EC" id="7.-.-.-" evidence="2"/>
<dbReference type="EMBL" id="CP000023">
    <property type="protein sequence ID" value="AAV61602.1"/>
    <property type="molecule type" value="Genomic_DNA"/>
</dbReference>
<dbReference type="RefSeq" id="WP_002947774.1">
    <property type="nucleotide sequence ID" value="NC_006448.1"/>
</dbReference>
<dbReference type="SMR" id="Q5M244"/>
<dbReference type="STRING" id="264199.stu2008"/>
<dbReference type="TCDB" id="3.A.1.25.6">
    <property type="family name" value="the atp-binding cassette (abc) superfamily"/>
</dbReference>
<dbReference type="KEGG" id="stl:stu2008"/>
<dbReference type="eggNOG" id="COG1122">
    <property type="taxonomic scope" value="Bacteria"/>
</dbReference>
<dbReference type="HOGENOM" id="CLU_000604_1_22_9"/>
<dbReference type="Proteomes" id="UP000001170">
    <property type="component" value="Chromosome"/>
</dbReference>
<dbReference type="GO" id="GO:0043190">
    <property type="term" value="C:ATP-binding cassette (ABC) transporter complex"/>
    <property type="evidence" value="ECO:0007669"/>
    <property type="project" value="TreeGrafter"/>
</dbReference>
<dbReference type="GO" id="GO:0005886">
    <property type="term" value="C:plasma membrane"/>
    <property type="evidence" value="ECO:0000314"/>
    <property type="project" value="UniProtKB"/>
</dbReference>
<dbReference type="GO" id="GO:0005524">
    <property type="term" value="F:ATP binding"/>
    <property type="evidence" value="ECO:0007669"/>
    <property type="project" value="UniProtKB-KW"/>
</dbReference>
<dbReference type="GO" id="GO:0016887">
    <property type="term" value="F:ATP hydrolysis activity"/>
    <property type="evidence" value="ECO:0007669"/>
    <property type="project" value="InterPro"/>
</dbReference>
<dbReference type="GO" id="GO:0042626">
    <property type="term" value="F:ATPase-coupled transmembrane transporter activity"/>
    <property type="evidence" value="ECO:0007669"/>
    <property type="project" value="TreeGrafter"/>
</dbReference>
<dbReference type="GO" id="GO:0032217">
    <property type="term" value="F:riboflavin transmembrane transporter activity"/>
    <property type="evidence" value="ECO:0000315"/>
    <property type="project" value="UniProtKB"/>
</dbReference>
<dbReference type="GO" id="GO:0032218">
    <property type="term" value="P:riboflavin transport"/>
    <property type="evidence" value="ECO:0000315"/>
    <property type="project" value="UniProtKB"/>
</dbReference>
<dbReference type="CDD" id="cd03225">
    <property type="entry name" value="ABC_cobalt_CbiO_domain1"/>
    <property type="match status" value="1"/>
</dbReference>
<dbReference type="FunFam" id="3.40.50.300:FF:000224">
    <property type="entry name" value="Energy-coupling factor transporter ATP-binding protein EcfA"/>
    <property type="match status" value="1"/>
</dbReference>
<dbReference type="Gene3D" id="3.40.50.300">
    <property type="entry name" value="P-loop containing nucleotide triphosphate hydrolases"/>
    <property type="match status" value="1"/>
</dbReference>
<dbReference type="InterPro" id="IPR003593">
    <property type="entry name" value="AAA+_ATPase"/>
</dbReference>
<dbReference type="InterPro" id="IPR003439">
    <property type="entry name" value="ABC_transporter-like_ATP-bd"/>
</dbReference>
<dbReference type="InterPro" id="IPR017871">
    <property type="entry name" value="ABC_transporter-like_CS"/>
</dbReference>
<dbReference type="InterPro" id="IPR015856">
    <property type="entry name" value="ABC_transpr_CbiO/EcfA_su"/>
</dbReference>
<dbReference type="InterPro" id="IPR050095">
    <property type="entry name" value="ECF_ABC_transporter_ATP-bd"/>
</dbReference>
<dbReference type="InterPro" id="IPR030946">
    <property type="entry name" value="EcfA2"/>
</dbReference>
<dbReference type="InterPro" id="IPR027417">
    <property type="entry name" value="P-loop_NTPase"/>
</dbReference>
<dbReference type="NCBIfam" id="TIGR04521">
    <property type="entry name" value="ECF_ATPase_2"/>
    <property type="match status" value="1"/>
</dbReference>
<dbReference type="NCBIfam" id="NF010155">
    <property type="entry name" value="PRK13634.1"/>
    <property type="match status" value="1"/>
</dbReference>
<dbReference type="PANTHER" id="PTHR43553:SF27">
    <property type="entry name" value="ENERGY-COUPLING FACTOR TRANSPORTER ATP-BINDING PROTEIN ECFA2"/>
    <property type="match status" value="1"/>
</dbReference>
<dbReference type="PANTHER" id="PTHR43553">
    <property type="entry name" value="HEAVY METAL TRANSPORTER"/>
    <property type="match status" value="1"/>
</dbReference>
<dbReference type="Pfam" id="PF00005">
    <property type="entry name" value="ABC_tran"/>
    <property type="match status" value="1"/>
</dbReference>
<dbReference type="SMART" id="SM00382">
    <property type="entry name" value="AAA"/>
    <property type="match status" value="1"/>
</dbReference>
<dbReference type="SUPFAM" id="SSF52540">
    <property type="entry name" value="P-loop containing nucleoside triphosphate hydrolases"/>
    <property type="match status" value="1"/>
</dbReference>
<dbReference type="PROSITE" id="PS00211">
    <property type="entry name" value="ABC_TRANSPORTER_1"/>
    <property type="match status" value="1"/>
</dbReference>
<dbReference type="PROSITE" id="PS50893">
    <property type="entry name" value="ABC_TRANSPORTER_2"/>
    <property type="match status" value="1"/>
</dbReference>
<dbReference type="PROSITE" id="PS51246">
    <property type="entry name" value="CBIO"/>
    <property type="match status" value="1"/>
</dbReference>
<keyword id="KW-0067">ATP-binding</keyword>
<keyword id="KW-1003">Cell membrane</keyword>
<keyword id="KW-0472">Membrane</keyword>
<keyword id="KW-0547">Nucleotide-binding</keyword>
<keyword id="KW-1185">Reference proteome</keyword>
<keyword id="KW-1278">Translocase</keyword>
<keyword id="KW-0813">Transport</keyword>
<organism>
    <name type="scientific">Streptococcus thermophilus (strain ATCC BAA-250 / LMG 18311)</name>
    <dbReference type="NCBI Taxonomy" id="264199"/>
    <lineage>
        <taxon>Bacteria</taxon>
        <taxon>Bacillati</taxon>
        <taxon>Bacillota</taxon>
        <taxon>Bacilli</taxon>
        <taxon>Lactobacillales</taxon>
        <taxon>Streptococcaceae</taxon>
        <taxon>Streptococcus</taxon>
    </lineage>
</organism>
<reference key="1">
    <citation type="journal article" date="2004" name="Nat. Biotechnol.">
        <title>Complete sequence and comparative genome analysis of the dairy bacterium Streptococcus thermophilus.</title>
        <authorList>
            <person name="Bolotin A."/>
            <person name="Quinquis B."/>
            <person name="Renault P."/>
            <person name="Sorokin A."/>
            <person name="Ehrlich S.D."/>
            <person name="Kulakauskas S."/>
            <person name="Lapidus A."/>
            <person name="Goltsman E."/>
            <person name="Mazur M."/>
            <person name="Pusch G.D."/>
            <person name="Fonstein M."/>
            <person name="Overbeek R."/>
            <person name="Kyprides N."/>
            <person name="Purnelle B."/>
            <person name="Prozzi D."/>
            <person name="Ngui K."/>
            <person name="Masuy D."/>
            <person name="Hancy F."/>
            <person name="Burteau S."/>
            <person name="Boutry M."/>
            <person name="Delcour J."/>
            <person name="Goffeau A."/>
            <person name="Hols P."/>
        </authorList>
    </citation>
    <scope>NUCLEOTIDE SEQUENCE [LARGE SCALE GENOMIC DNA]</scope>
    <source>
        <strain>ATCC BAA-250 / LMG 18311</strain>
    </source>
</reference>
<reference key="2">
    <citation type="journal article" date="2013" name="Proc. Natl. Acad. Sci. U.S.A.">
        <title>Assembly and mechanism of a group II ECF transporter.</title>
        <authorList>
            <person name="Karpowich N.K."/>
            <person name="Wang D.N."/>
        </authorList>
    </citation>
    <scope>FUNCTION AS A TRANSPORT COMPONENT</scope>
    <scope>SUBUNIT</scope>
    <scope>SUBCELLULAR LOCATION</scope>
    <scope>EXPRESSION IN E.COLI</scope>
    <scope>MUTAGENESIS OF GLN-97 AND GLU-171</scope>
    <source>
        <strain>ATCC BAA-250 / LMG 18311</strain>
    </source>
</reference>
<evidence type="ECO:0000255" key="1"/>
<evidence type="ECO:0000255" key="2">
    <source>
        <dbReference type="HAMAP-Rule" id="MF_01710"/>
    </source>
</evidence>
<evidence type="ECO:0000269" key="3">
    <source>
    </source>
</evidence>
<evidence type="ECO:0000305" key="4">
    <source>
    </source>
</evidence>
<accession>Q5M244</accession>
<gene>
    <name evidence="2" type="primary">ecfA2</name>
    <name type="synonym">cbiO2</name>
    <name type="ordered locus">stu2008</name>
</gene>